<gene>
    <name type="primary">grdB</name>
    <name type="ordered locus">CHY_2393</name>
</gene>
<proteinExistence type="inferred from homology"/>
<dbReference type="EC" id="1.21.4.2"/>
<dbReference type="EMBL" id="CP000141">
    <property type="protein sequence ID" value="ABB15736.1"/>
    <property type="molecule type" value="Genomic_DNA"/>
</dbReference>
<dbReference type="STRING" id="246194.CHY_2393"/>
<dbReference type="KEGG" id="chy:CHY_2393"/>
<dbReference type="eggNOG" id="COG1978">
    <property type="taxonomic scope" value="Bacteria"/>
</dbReference>
<dbReference type="HOGENOM" id="CLU_053106_0_0_9"/>
<dbReference type="InParanoid" id="Q3A9J4"/>
<dbReference type="OrthoDB" id="9764267at2"/>
<dbReference type="Proteomes" id="UP000002706">
    <property type="component" value="Chromosome"/>
</dbReference>
<dbReference type="GO" id="GO:0030700">
    <property type="term" value="C:glycine reductase complex"/>
    <property type="evidence" value="ECO:0007669"/>
    <property type="project" value="InterPro"/>
</dbReference>
<dbReference type="GO" id="GO:0030699">
    <property type="term" value="F:glycine reductase activity"/>
    <property type="evidence" value="ECO:0007669"/>
    <property type="project" value="UniProtKB-EC"/>
</dbReference>
<dbReference type="InterPro" id="IPR010186">
    <property type="entry name" value="Gly_red_sel_B"/>
</dbReference>
<dbReference type="InterPro" id="IPR010187">
    <property type="entry name" value="Various_sel_PB"/>
</dbReference>
<dbReference type="NCBIfam" id="TIGR01917">
    <property type="entry name" value="gly_red_sel_B"/>
    <property type="match status" value="1"/>
</dbReference>
<dbReference type="NCBIfam" id="TIGR01918">
    <property type="entry name" value="various_sel_PB"/>
    <property type="match status" value="1"/>
</dbReference>
<dbReference type="Pfam" id="PF07355">
    <property type="entry name" value="GRDB"/>
    <property type="match status" value="1"/>
</dbReference>
<keyword id="KW-0560">Oxidoreductase</keyword>
<keyword id="KW-1185">Reference proteome</keyword>
<keyword id="KW-0712">Selenocysteine</keyword>
<accession>Q3A9J4</accession>
<name>GRDB_CARHZ</name>
<sequence length="435" mass="46175">MAKFRVVHYLNQFFGQIGGEEKADTAPLKKDGPVGPGTALNGAFKGEAEVVGTVICGDSYFAENMEEALKQILSMIKEYNPDLVVAGPAFNAGRYGTACGAVAEAVVKNLGIPAVTGMYPENPGVEMYKKSVYIIATADSAIGMRNAIPKMAALGLKLLKKEEIGTPEQEGYIARGIRKNYFAEERGAKRAVDMLIAKIKGENFTTELPMPAFDRVPPNPAIKDLSKATIALVTSGGIVPKGNPDRIESSSASKFGKYSIAGVKDLTSDTFETAHGGYDPVYANQDADRVLPVDVLREMEAEGKIGKLHDYYYATVGNGTSVANAAKFGQAIAADLKASGVDAVILTSTUGTCTRCGAAMVKEIERAGIPVVHMCTIVPISKTVGANRIVPTVAIPHPLGNPALPADEEKALRRKLVEKALKALTTEVEGQTVFD</sequence>
<organism>
    <name type="scientific">Carboxydothermus hydrogenoformans (strain ATCC BAA-161 / DSM 6008 / Z-2901)</name>
    <dbReference type="NCBI Taxonomy" id="246194"/>
    <lineage>
        <taxon>Bacteria</taxon>
        <taxon>Bacillati</taxon>
        <taxon>Bacillota</taxon>
        <taxon>Clostridia</taxon>
        <taxon>Thermoanaerobacterales</taxon>
        <taxon>Thermoanaerobacteraceae</taxon>
        <taxon>Carboxydothermus</taxon>
    </lineage>
</organism>
<protein>
    <recommendedName>
        <fullName>Glycine reductase complex component B subunit gamma</fullName>
        <ecNumber>1.21.4.2</ecNumber>
    </recommendedName>
    <alternativeName>
        <fullName>Selenoprotein PB gamma</fullName>
    </alternativeName>
</protein>
<evidence type="ECO:0000250" key="1"/>
<evidence type="ECO:0000305" key="2"/>
<reference key="1">
    <citation type="journal article" date="2005" name="PLoS Genet.">
        <title>Life in hot carbon monoxide: the complete genome sequence of Carboxydothermus hydrogenoformans Z-2901.</title>
        <authorList>
            <person name="Wu M."/>
            <person name="Ren Q."/>
            <person name="Durkin A.S."/>
            <person name="Daugherty S.C."/>
            <person name="Brinkac L.M."/>
            <person name="Dodson R.J."/>
            <person name="Madupu R."/>
            <person name="Sullivan S.A."/>
            <person name="Kolonay J.F."/>
            <person name="Nelson W.C."/>
            <person name="Tallon L.J."/>
            <person name="Jones K.M."/>
            <person name="Ulrich L.E."/>
            <person name="Gonzalez J.M."/>
            <person name="Zhulin I.B."/>
            <person name="Robb F.T."/>
            <person name="Eisen J.A."/>
        </authorList>
    </citation>
    <scope>NUCLEOTIDE SEQUENCE [LARGE SCALE GENOMIC DNA]</scope>
    <source>
        <strain>ATCC BAA-161 / DSM 6008 / Z-2901</strain>
    </source>
</reference>
<comment type="function">
    <text evidence="1">In the first step of glycine reductase, the substrate is bound to component PB via a Schiff base intermediate. Then the PB-activated substrate is nucleophilically attacked by the selenol anion of component PA to transform it to a carboxymethylated selenoether and the respective amine. By action of component PC, acetyl phosphate is formed, leaving component PA in its oxidized state. Finally component PA becomes reduced by the thioredoxin system to start a new catalytic cycle of reductive deamination (By similarity).</text>
</comment>
<comment type="catalytic activity">
    <reaction>
        <text>acetyl phosphate + [thioredoxin]-disulfide + NH4(+) + H2O = [thioredoxin]-dithiol + glycine + phosphate + H(+)</text>
        <dbReference type="Rhea" id="RHEA:12232"/>
        <dbReference type="Rhea" id="RHEA-COMP:10698"/>
        <dbReference type="Rhea" id="RHEA-COMP:10700"/>
        <dbReference type="ChEBI" id="CHEBI:15377"/>
        <dbReference type="ChEBI" id="CHEBI:15378"/>
        <dbReference type="ChEBI" id="CHEBI:22191"/>
        <dbReference type="ChEBI" id="CHEBI:28938"/>
        <dbReference type="ChEBI" id="CHEBI:29950"/>
        <dbReference type="ChEBI" id="CHEBI:43474"/>
        <dbReference type="ChEBI" id="CHEBI:50058"/>
        <dbReference type="ChEBI" id="CHEBI:57305"/>
        <dbReference type="EC" id="1.21.4.2"/>
    </reaction>
</comment>
<comment type="subunit">
    <text evidence="1">Heterohexamer of two alpha, two beta and two gamma subunits. Component of the glycine reductase complex, together with components A and C. PB is substrate specific (By similarity).</text>
</comment>
<comment type="similarity">
    <text evidence="2">Belongs to the GrdB/GrdF/GrdH family.</text>
</comment>
<feature type="chain" id="PRO_0000318647" description="Glycine reductase complex component B subunit gamma">
    <location>
        <begin position="1"/>
        <end position="435"/>
    </location>
</feature>
<feature type="active site">
    <location>
        <position position="350"/>
    </location>
</feature>
<feature type="non-standard amino acid" description="Selenocysteine">
    <location>
        <position position="350"/>
    </location>
</feature>